<feature type="chain" id="PRO_0000333591" description="U6 snRNA-associated Sm-like protein LSm6">
    <location>
        <begin position="1"/>
        <end position="79"/>
    </location>
</feature>
<feature type="domain" description="Sm" evidence="2">
    <location>
        <begin position="6"/>
        <end position="79"/>
    </location>
</feature>
<accession>Q6FYB6</accession>
<accession>B4UMX3</accession>
<name>LSM6_CANGA</name>
<keyword id="KW-0963">Cytoplasm</keyword>
<keyword id="KW-0507">mRNA processing</keyword>
<keyword id="KW-0508">mRNA splicing</keyword>
<keyword id="KW-0539">Nucleus</keyword>
<keyword id="KW-1185">Reference proteome</keyword>
<keyword id="KW-0687">Ribonucleoprotein</keyword>
<keyword id="KW-0694">RNA-binding</keyword>
<keyword id="KW-0698">rRNA processing</keyword>
<keyword id="KW-0747">Spliceosome</keyword>
<keyword id="KW-0819">tRNA processing</keyword>
<protein>
    <recommendedName>
        <fullName>U6 snRNA-associated Sm-like protein LSm6</fullName>
    </recommendedName>
</protein>
<proteinExistence type="inferred from homology"/>
<comment type="function">
    <text evidence="1">Component of LSm protein complexes, which are involved in RNA processing and may function in a chaperone-like manner, facilitating the efficient association of RNA processing factors with their substrates. Component of the cytoplasmic LSM1-LSM7 complex, which is thought to be involved in mRNA degradation by activating the decapping step in the 5'-to-3' mRNA decay pathway. Component of the nuclear LSM2-LSM8 complex, which is involved in splicing of nuclear mRNAs. LSM2-LSM8 associates with multiple snRNP complexes containing the U6 snRNA (U4/U6 di-snRNP, spliceosomal U4/U6.U5 tri-snRNP, and free U6 snRNP). It binds directly to the 3'-terminal U-tract of U6 snRNA and plays a role in the biogenesis and stability of the U6 snRNP and U4/U6 snRNP complexes. LSM2-LSM8 probably also is involved degradation of nuclear pre-mRNA by targeting them for decapping, and in processing of pre-tRNAs, pre-rRNAs and U3 snoRNA (By similarity).</text>
</comment>
<comment type="subunit">
    <text evidence="1">Component of the heptameric LSM1-LSM7 complex, which consists of LSM1, LSM2, LSM3, LSM4, LSM5, LSM6 and LSM7. Component of the heptameric LSM2-LSM8 complex, which consists of LSM2, LSM3, LSM4, LSM5, LSM6, LSM7 and LSM8. The LSm subunits form a seven-membered ring structure with a doughnut shape (By similarity).</text>
</comment>
<comment type="subcellular location">
    <subcellularLocation>
        <location evidence="1">Cytoplasm</location>
    </subcellularLocation>
    <subcellularLocation>
        <location evidence="1">Nucleus</location>
    </subcellularLocation>
</comment>
<comment type="similarity">
    <text evidence="3">Belongs to the snRNP Sm proteins family. SmF/LSm6 subfamily.</text>
</comment>
<comment type="sequence caution" evidence="3">
    <conflict type="erroneous initiation">
        <sequence resource="EMBL-CDS" id="CAR57997"/>
    </conflict>
</comment>
<dbReference type="EMBL" id="CR380947">
    <property type="protein sequence ID" value="CAR57997.1"/>
    <property type="status" value="ALT_INIT"/>
    <property type="molecule type" value="Genomic_DNA"/>
</dbReference>
<dbReference type="RefSeq" id="XP_002999513.1">
    <property type="nucleotide sequence ID" value="XM_002999467.1"/>
</dbReference>
<dbReference type="SMR" id="Q6FYB6"/>
<dbReference type="FunCoup" id="Q6FYB6">
    <property type="interactions" value="900"/>
</dbReference>
<dbReference type="STRING" id="284593.Q6FYB6"/>
<dbReference type="KEGG" id="cgr:9487961"/>
<dbReference type="eggNOG" id="KOG1783">
    <property type="taxonomic scope" value="Eukaryota"/>
</dbReference>
<dbReference type="HOGENOM" id="CLU_2108715_0_0_1"/>
<dbReference type="InParanoid" id="Q6FYB6"/>
<dbReference type="Proteomes" id="UP000002428">
    <property type="component" value="Chromosome A"/>
</dbReference>
<dbReference type="GO" id="GO:0005730">
    <property type="term" value="C:nucleolus"/>
    <property type="evidence" value="ECO:0007669"/>
    <property type="project" value="TreeGrafter"/>
</dbReference>
<dbReference type="GO" id="GO:0000932">
    <property type="term" value="C:P-body"/>
    <property type="evidence" value="ECO:0007669"/>
    <property type="project" value="TreeGrafter"/>
</dbReference>
<dbReference type="GO" id="GO:0005732">
    <property type="term" value="C:sno(s)RNA-containing ribonucleoprotein complex"/>
    <property type="evidence" value="ECO:0007669"/>
    <property type="project" value="TreeGrafter"/>
</dbReference>
<dbReference type="GO" id="GO:0005681">
    <property type="term" value="C:spliceosomal complex"/>
    <property type="evidence" value="ECO:0007669"/>
    <property type="project" value="UniProtKB-KW"/>
</dbReference>
<dbReference type="GO" id="GO:0046540">
    <property type="term" value="C:U4/U6 x U5 tri-snRNP complex"/>
    <property type="evidence" value="ECO:0007669"/>
    <property type="project" value="TreeGrafter"/>
</dbReference>
<dbReference type="GO" id="GO:0005688">
    <property type="term" value="C:U6 snRNP"/>
    <property type="evidence" value="ECO:0007669"/>
    <property type="project" value="TreeGrafter"/>
</dbReference>
<dbReference type="GO" id="GO:0003723">
    <property type="term" value="F:RNA binding"/>
    <property type="evidence" value="ECO:0007669"/>
    <property type="project" value="UniProtKB-KW"/>
</dbReference>
<dbReference type="GO" id="GO:0030490">
    <property type="term" value="P:maturation of SSU-rRNA"/>
    <property type="evidence" value="ECO:0007669"/>
    <property type="project" value="TreeGrafter"/>
</dbReference>
<dbReference type="GO" id="GO:0000398">
    <property type="term" value="P:mRNA splicing, via spliceosome"/>
    <property type="evidence" value="ECO:0007669"/>
    <property type="project" value="InterPro"/>
</dbReference>
<dbReference type="GO" id="GO:0008033">
    <property type="term" value="P:tRNA processing"/>
    <property type="evidence" value="ECO:0007669"/>
    <property type="project" value="UniProtKB-KW"/>
</dbReference>
<dbReference type="FunFam" id="2.30.30.100:FF:000037">
    <property type="entry name" value="U6 snRNA-associated Sm-like protein LSm6"/>
    <property type="match status" value="1"/>
</dbReference>
<dbReference type="Gene3D" id="2.30.30.100">
    <property type="match status" value="1"/>
</dbReference>
<dbReference type="InterPro" id="IPR016487">
    <property type="entry name" value="Lsm6/sSmF"/>
</dbReference>
<dbReference type="InterPro" id="IPR010920">
    <property type="entry name" value="LSM_dom_sf"/>
</dbReference>
<dbReference type="InterPro" id="IPR047575">
    <property type="entry name" value="Sm"/>
</dbReference>
<dbReference type="InterPro" id="IPR001163">
    <property type="entry name" value="Sm_dom_euk/arc"/>
</dbReference>
<dbReference type="PANTHER" id="PTHR11021">
    <property type="entry name" value="SMALL NUCLEAR RIBONUCLEOPROTEIN F SNRNP-F"/>
    <property type="match status" value="1"/>
</dbReference>
<dbReference type="PANTHER" id="PTHR11021:SF1">
    <property type="entry name" value="U6 SNRNA-ASSOCIATED SM-LIKE PROTEIN LSM6"/>
    <property type="match status" value="1"/>
</dbReference>
<dbReference type="Pfam" id="PF01423">
    <property type="entry name" value="LSM"/>
    <property type="match status" value="1"/>
</dbReference>
<dbReference type="SMART" id="SM00651">
    <property type="entry name" value="Sm"/>
    <property type="match status" value="1"/>
</dbReference>
<dbReference type="SUPFAM" id="SSF50182">
    <property type="entry name" value="Sm-like ribonucleoproteins"/>
    <property type="match status" value="1"/>
</dbReference>
<dbReference type="PROSITE" id="PS52002">
    <property type="entry name" value="SM"/>
    <property type="match status" value="1"/>
</dbReference>
<evidence type="ECO:0000250" key="1"/>
<evidence type="ECO:0000255" key="2">
    <source>
        <dbReference type="PROSITE-ProRule" id="PRU01346"/>
    </source>
</evidence>
<evidence type="ECO:0000305" key="3"/>
<organism>
    <name type="scientific">Candida glabrata (strain ATCC 2001 / BCRC 20586 / JCM 3761 / NBRC 0622 / NRRL Y-65 / CBS 138)</name>
    <name type="common">Yeast</name>
    <name type="synonym">Nakaseomyces glabratus</name>
    <dbReference type="NCBI Taxonomy" id="284593"/>
    <lineage>
        <taxon>Eukaryota</taxon>
        <taxon>Fungi</taxon>
        <taxon>Dikarya</taxon>
        <taxon>Ascomycota</taxon>
        <taxon>Saccharomycotina</taxon>
        <taxon>Saccharomycetes</taxon>
        <taxon>Saccharomycetales</taxon>
        <taxon>Saccharomycetaceae</taxon>
        <taxon>Nakaseomyces</taxon>
    </lineage>
</organism>
<gene>
    <name type="primary">LSM6</name>
    <name type="ordered locus">CAGL0A03051g</name>
</gene>
<sequence length="79" mass="8900">MAEESVSTQFLSNIIGKPVHVKLYSGMLYSGVLESIDGFMNVALSETREHYEHPNNNLLKKYASDVFLRGTQVMYISEA</sequence>
<reference key="1">
    <citation type="journal article" date="2004" name="Nature">
        <title>Genome evolution in yeasts.</title>
        <authorList>
            <person name="Dujon B."/>
            <person name="Sherman D."/>
            <person name="Fischer G."/>
            <person name="Durrens P."/>
            <person name="Casaregola S."/>
            <person name="Lafontaine I."/>
            <person name="de Montigny J."/>
            <person name="Marck C."/>
            <person name="Neuveglise C."/>
            <person name="Talla E."/>
            <person name="Goffard N."/>
            <person name="Frangeul L."/>
            <person name="Aigle M."/>
            <person name="Anthouard V."/>
            <person name="Babour A."/>
            <person name="Barbe V."/>
            <person name="Barnay S."/>
            <person name="Blanchin S."/>
            <person name="Beckerich J.-M."/>
            <person name="Beyne E."/>
            <person name="Bleykasten C."/>
            <person name="Boisrame A."/>
            <person name="Boyer J."/>
            <person name="Cattolico L."/>
            <person name="Confanioleri F."/>
            <person name="de Daruvar A."/>
            <person name="Despons L."/>
            <person name="Fabre E."/>
            <person name="Fairhead C."/>
            <person name="Ferry-Dumazet H."/>
            <person name="Groppi A."/>
            <person name="Hantraye F."/>
            <person name="Hennequin C."/>
            <person name="Jauniaux N."/>
            <person name="Joyet P."/>
            <person name="Kachouri R."/>
            <person name="Kerrest A."/>
            <person name="Koszul R."/>
            <person name="Lemaire M."/>
            <person name="Lesur I."/>
            <person name="Ma L."/>
            <person name="Muller H."/>
            <person name="Nicaud J.-M."/>
            <person name="Nikolski M."/>
            <person name="Oztas S."/>
            <person name="Ozier-Kalogeropoulos O."/>
            <person name="Pellenz S."/>
            <person name="Potier S."/>
            <person name="Richard G.-F."/>
            <person name="Straub M.-L."/>
            <person name="Suleau A."/>
            <person name="Swennen D."/>
            <person name="Tekaia F."/>
            <person name="Wesolowski-Louvel M."/>
            <person name="Westhof E."/>
            <person name="Wirth B."/>
            <person name="Zeniou-Meyer M."/>
            <person name="Zivanovic Y."/>
            <person name="Bolotin-Fukuhara M."/>
            <person name="Thierry A."/>
            <person name="Bouchier C."/>
            <person name="Caudron B."/>
            <person name="Scarpelli C."/>
            <person name="Gaillardin C."/>
            <person name="Weissenbach J."/>
            <person name="Wincker P."/>
            <person name="Souciet J.-L."/>
        </authorList>
    </citation>
    <scope>NUCLEOTIDE SEQUENCE [LARGE SCALE GENOMIC DNA]</scope>
    <source>
        <strain>ATCC 2001 / BCRC 20586 / JCM 3761 / NBRC 0622 / NRRL Y-65 / CBS 138</strain>
    </source>
</reference>